<reference key="1">
    <citation type="journal article" date="2008" name="Proc. Natl. Acad. Sci. U.S.A.">
        <title>Complete genome of the uncultured termite group 1 bacteria in a single host protist cell.</title>
        <authorList>
            <person name="Hongoh Y."/>
            <person name="Sharma V.K."/>
            <person name="Prakash T."/>
            <person name="Noda S."/>
            <person name="Taylor T.D."/>
            <person name="Kudo T."/>
            <person name="Sakaki Y."/>
            <person name="Toyoda A."/>
            <person name="Hattori M."/>
            <person name="Ohkuma M."/>
        </authorList>
    </citation>
    <scope>NUCLEOTIDE SEQUENCE [LARGE SCALE GENOMIC DNA]</scope>
</reference>
<accession>B1GYZ9</accession>
<dbReference type="EC" id="3.6.-.-" evidence="1"/>
<dbReference type="EMBL" id="AP009510">
    <property type="protein sequence ID" value="BAG14242.1"/>
    <property type="status" value="ALT_INIT"/>
    <property type="molecule type" value="Genomic_DNA"/>
</dbReference>
<dbReference type="RefSeq" id="WP_095558965.1">
    <property type="nucleotide sequence ID" value="NC_020419.1"/>
</dbReference>
<dbReference type="SMR" id="B1GYZ9"/>
<dbReference type="STRING" id="471821.TGRD_759"/>
<dbReference type="KEGG" id="rsd:TGRD_759"/>
<dbReference type="PATRIC" id="fig|471821.5.peg.1305"/>
<dbReference type="HOGENOM" id="CLU_019624_4_1_0"/>
<dbReference type="Proteomes" id="UP000001691">
    <property type="component" value="Chromosome"/>
</dbReference>
<dbReference type="GO" id="GO:0005829">
    <property type="term" value="C:cytosol"/>
    <property type="evidence" value="ECO:0007669"/>
    <property type="project" value="TreeGrafter"/>
</dbReference>
<dbReference type="GO" id="GO:0005525">
    <property type="term" value="F:GTP binding"/>
    <property type="evidence" value="ECO:0007669"/>
    <property type="project" value="UniProtKB-UniRule"/>
</dbReference>
<dbReference type="GO" id="GO:0003924">
    <property type="term" value="F:GTPase activity"/>
    <property type="evidence" value="ECO:0007669"/>
    <property type="project" value="UniProtKB-UniRule"/>
</dbReference>
<dbReference type="GO" id="GO:0046872">
    <property type="term" value="F:metal ion binding"/>
    <property type="evidence" value="ECO:0007669"/>
    <property type="project" value="UniProtKB-KW"/>
</dbReference>
<dbReference type="GO" id="GO:0030488">
    <property type="term" value="P:tRNA methylation"/>
    <property type="evidence" value="ECO:0007669"/>
    <property type="project" value="TreeGrafter"/>
</dbReference>
<dbReference type="GO" id="GO:0002098">
    <property type="term" value="P:tRNA wobble uridine modification"/>
    <property type="evidence" value="ECO:0007669"/>
    <property type="project" value="TreeGrafter"/>
</dbReference>
<dbReference type="CDD" id="cd04164">
    <property type="entry name" value="trmE"/>
    <property type="match status" value="1"/>
</dbReference>
<dbReference type="CDD" id="cd14858">
    <property type="entry name" value="TrmE_N"/>
    <property type="match status" value="1"/>
</dbReference>
<dbReference type="Gene3D" id="3.40.50.300">
    <property type="entry name" value="P-loop containing nucleotide triphosphate hydrolases"/>
    <property type="match status" value="1"/>
</dbReference>
<dbReference type="Gene3D" id="3.30.1360.120">
    <property type="entry name" value="Probable tRNA modification gtpase trme, domain 1"/>
    <property type="match status" value="1"/>
</dbReference>
<dbReference type="Gene3D" id="1.20.120.430">
    <property type="entry name" value="tRNA modification GTPase MnmE domain 2"/>
    <property type="match status" value="1"/>
</dbReference>
<dbReference type="HAMAP" id="MF_00379">
    <property type="entry name" value="GTPase_MnmE"/>
    <property type="match status" value="1"/>
</dbReference>
<dbReference type="InterPro" id="IPR031168">
    <property type="entry name" value="G_TrmE"/>
</dbReference>
<dbReference type="InterPro" id="IPR006073">
    <property type="entry name" value="GTP-bd"/>
</dbReference>
<dbReference type="InterPro" id="IPR018948">
    <property type="entry name" value="GTP-bd_TrmE_N"/>
</dbReference>
<dbReference type="InterPro" id="IPR004520">
    <property type="entry name" value="GTPase_MnmE"/>
</dbReference>
<dbReference type="InterPro" id="IPR027368">
    <property type="entry name" value="MnmE_dom2"/>
</dbReference>
<dbReference type="InterPro" id="IPR025867">
    <property type="entry name" value="MnmE_helical"/>
</dbReference>
<dbReference type="InterPro" id="IPR027417">
    <property type="entry name" value="P-loop_NTPase"/>
</dbReference>
<dbReference type="InterPro" id="IPR005225">
    <property type="entry name" value="Small_GTP-bd"/>
</dbReference>
<dbReference type="InterPro" id="IPR027266">
    <property type="entry name" value="TrmE/GcvT_dom1"/>
</dbReference>
<dbReference type="NCBIfam" id="TIGR00450">
    <property type="entry name" value="mnmE_trmE_thdF"/>
    <property type="match status" value="1"/>
</dbReference>
<dbReference type="NCBIfam" id="TIGR00231">
    <property type="entry name" value="small_GTP"/>
    <property type="match status" value="1"/>
</dbReference>
<dbReference type="PANTHER" id="PTHR42714">
    <property type="entry name" value="TRNA MODIFICATION GTPASE GTPBP3"/>
    <property type="match status" value="1"/>
</dbReference>
<dbReference type="PANTHER" id="PTHR42714:SF2">
    <property type="entry name" value="TRNA MODIFICATION GTPASE GTPBP3, MITOCHONDRIAL"/>
    <property type="match status" value="1"/>
</dbReference>
<dbReference type="Pfam" id="PF01926">
    <property type="entry name" value="MMR_HSR1"/>
    <property type="match status" value="1"/>
</dbReference>
<dbReference type="Pfam" id="PF12631">
    <property type="entry name" value="MnmE_helical"/>
    <property type="match status" value="1"/>
</dbReference>
<dbReference type="Pfam" id="PF10396">
    <property type="entry name" value="TrmE_N"/>
    <property type="match status" value="1"/>
</dbReference>
<dbReference type="PRINTS" id="PR00449">
    <property type="entry name" value="RASTRNSFRMNG"/>
</dbReference>
<dbReference type="SUPFAM" id="SSF52540">
    <property type="entry name" value="P-loop containing nucleoside triphosphate hydrolases"/>
    <property type="match status" value="1"/>
</dbReference>
<dbReference type="PROSITE" id="PS51709">
    <property type="entry name" value="G_TRME"/>
    <property type="match status" value="1"/>
</dbReference>
<sequence length="456" mass="49775">MNYLKEDTIAALSTAAGKSAIAVIRLSGENSFQIIGKIFKTHSKPEQQVKHGYITDGIEKKDEVLCTFFKAPHTYTGENLVEIAAHGNPVIINEILNLLYKNGARPAGPGEFTYRAFLNDKMNLAEAEAVCALITSKTEMSAKAALNSLSGEFSSKIKNIRDAVTNLIASMEANLDHPDEDNMFLSRSEKLSRFDSCIKDVQNLLNSYKTGKILQYGIKVVIIGKPNAGKSSLLNAILGKNRAIVTDIAGTTTDTVEETIDCCGIPLIITDTAGIREHSENLIEILGQAKTREAVCKADILIWLFDSSSEPDCNDAKIADFLKKSDLNIPIICVLNKSDLPPLFSSSLLNRENKVKVKISAKTGVGIADLLDEIVKIAGVSESKNDYLMINTRHFILLQNTLESLIRTKQSLSAKDADEIACFEALSAQISLNEILGINVKQDILDTIFSTFCIGK</sequence>
<feature type="chain" id="PRO_0000345935" description="tRNA modification GTPase MnmE">
    <location>
        <begin position="1"/>
        <end position="456"/>
    </location>
</feature>
<feature type="domain" description="TrmE-type G">
    <location>
        <begin position="217"/>
        <end position="379"/>
    </location>
</feature>
<feature type="binding site" evidence="1">
    <location>
        <position position="25"/>
    </location>
    <ligand>
        <name>(6S)-5-formyl-5,6,7,8-tetrahydrofolate</name>
        <dbReference type="ChEBI" id="CHEBI:57457"/>
    </ligand>
</feature>
<feature type="binding site" evidence="1">
    <location>
        <position position="82"/>
    </location>
    <ligand>
        <name>(6S)-5-formyl-5,6,7,8-tetrahydrofolate</name>
        <dbReference type="ChEBI" id="CHEBI:57457"/>
    </ligand>
</feature>
<feature type="binding site" evidence="1">
    <location>
        <position position="121"/>
    </location>
    <ligand>
        <name>(6S)-5-formyl-5,6,7,8-tetrahydrofolate</name>
        <dbReference type="ChEBI" id="CHEBI:57457"/>
    </ligand>
</feature>
<feature type="binding site" evidence="1">
    <location>
        <begin position="227"/>
        <end position="232"/>
    </location>
    <ligand>
        <name>GTP</name>
        <dbReference type="ChEBI" id="CHEBI:37565"/>
    </ligand>
</feature>
<feature type="binding site" evidence="1">
    <location>
        <position position="227"/>
    </location>
    <ligand>
        <name>K(+)</name>
        <dbReference type="ChEBI" id="CHEBI:29103"/>
    </ligand>
</feature>
<feature type="binding site" evidence="1">
    <location>
        <position position="231"/>
    </location>
    <ligand>
        <name>Mg(2+)</name>
        <dbReference type="ChEBI" id="CHEBI:18420"/>
    </ligand>
</feature>
<feature type="binding site" evidence="1">
    <location>
        <begin position="246"/>
        <end position="252"/>
    </location>
    <ligand>
        <name>GTP</name>
        <dbReference type="ChEBI" id="CHEBI:37565"/>
    </ligand>
</feature>
<feature type="binding site" evidence="1">
    <location>
        <position position="246"/>
    </location>
    <ligand>
        <name>K(+)</name>
        <dbReference type="ChEBI" id="CHEBI:29103"/>
    </ligand>
</feature>
<feature type="binding site" evidence="1">
    <location>
        <position position="248"/>
    </location>
    <ligand>
        <name>K(+)</name>
        <dbReference type="ChEBI" id="CHEBI:29103"/>
    </ligand>
</feature>
<feature type="binding site" evidence="1">
    <location>
        <position position="251"/>
    </location>
    <ligand>
        <name>K(+)</name>
        <dbReference type="ChEBI" id="CHEBI:29103"/>
    </ligand>
</feature>
<feature type="binding site" evidence="1">
    <location>
        <position position="252"/>
    </location>
    <ligand>
        <name>Mg(2+)</name>
        <dbReference type="ChEBI" id="CHEBI:18420"/>
    </ligand>
</feature>
<feature type="binding site" evidence="1">
    <location>
        <begin position="271"/>
        <end position="274"/>
    </location>
    <ligand>
        <name>GTP</name>
        <dbReference type="ChEBI" id="CHEBI:37565"/>
    </ligand>
</feature>
<feature type="binding site" evidence="1">
    <location>
        <position position="456"/>
    </location>
    <ligand>
        <name>(6S)-5-formyl-5,6,7,8-tetrahydrofolate</name>
        <dbReference type="ChEBI" id="CHEBI:57457"/>
    </ligand>
</feature>
<evidence type="ECO:0000255" key="1">
    <source>
        <dbReference type="HAMAP-Rule" id="MF_00379"/>
    </source>
</evidence>
<evidence type="ECO:0000305" key="2"/>
<gene>
    <name evidence="1" type="primary">mnmE</name>
    <name evidence="1" type="synonym">trmE</name>
    <name type="ordered locus">TGRD_759</name>
</gene>
<organism>
    <name type="scientific">Endomicrobium trichonymphae</name>
    <dbReference type="NCBI Taxonomy" id="1408204"/>
    <lineage>
        <taxon>Bacteria</taxon>
        <taxon>Pseudomonadati</taxon>
        <taxon>Elusimicrobiota</taxon>
        <taxon>Endomicrobiia</taxon>
        <taxon>Endomicrobiales</taxon>
        <taxon>Endomicrobiaceae</taxon>
        <taxon>Candidatus Endomicrobiellum</taxon>
    </lineage>
</organism>
<protein>
    <recommendedName>
        <fullName evidence="1">tRNA modification GTPase MnmE</fullName>
        <ecNumber evidence="1">3.6.-.-</ecNumber>
    </recommendedName>
</protein>
<proteinExistence type="inferred from homology"/>
<name>MNME_ENDTX</name>
<comment type="function">
    <text evidence="1">Exhibits a very high intrinsic GTPase hydrolysis rate. Involved in the addition of a carboxymethylaminomethyl (cmnm) group at the wobble position (U34) of certain tRNAs, forming tRNA-cmnm(5)s(2)U34.</text>
</comment>
<comment type="cofactor">
    <cofactor evidence="1">
        <name>K(+)</name>
        <dbReference type="ChEBI" id="CHEBI:29103"/>
    </cofactor>
    <text evidence="1">Binds 1 potassium ion per subunit.</text>
</comment>
<comment type="subunit">
    <text evidence="1">Homodimer. Heterotetramer of two MnmE and two MnmG subunits.</text>
</comment>
<comment type="subcellular location">
    <subcellularLocation>
        <location evidence="1">Cytoplasm</location>
    </subcellularLocation>
</comment>
<comment type="similarity">
    <text evidence="1">Belongs to the TRAFAC class TrmE-Era-EngA-EngB-Septin-like GTPase superfamily. TrmE GTPase family.</text>
</comment>
<comment type="sequence caution" evidence="2">
    <conflict type="erroneous initiation">
        <sequence resource="EMBL-CDS" id="BAG14242"/>
    </conflict>
</comment>
<keyword id="KW-0963">Cytoplasm</keyword>
<keyword id="KW-0342">GTP-binding</keyword>
<keyword id="KW-0378">Hydrolase</keyword>
<keyword id="KW-0460">Magnesium</keyword>
<keyword id="KW-0479">Metal-binding</keyword>
<keyword id="KW-0547">Nucleotide-binding</keyword>
<keyword id="KW-0630">Potassium</keyword>
<keyword id="KW-0819">tRNA processing</keyword>